<evidence type="ECO:0000255" key="1">
    <source>
        <dbReference type="HAMAP-Rule" id="MF_00073"/>
    </source>
</evidence>
<protein>
    <recommendedName>
        <fullName evidence="1">Transcription antitermination protein NusB</fullName>
    </recommendedName>
    <alternativeName>
        <fullName evidence="1">Antitermination factor NusB</fullName>
    </alternativeName>
</protein>
<proteinExistence type="inferred from homology"/>
<feature type="chain" id="PRO_1000202488" description="Transcription antitermination protein NusB">
    <location>
        <begin position="1"/>
        <end position="165"/>
    </location>
</feature>
<sequence length="165" mass="17707">MSGTHKKLGARHKARKRAVDFLFEAEARDLDPVALASERSDLSVKDDAVAPVAAYTVTLVSGVAENLDRIDQVISSHLQDWTLERLPAVDRAILRIAVWELFHATDVPPVVAVDEAVELAKQLSTDDSPGFVNGILGQVVLVAPQVRSAAAATSQRAQESDSGTE</sequence>
<organism>
    <name type="scientific">Rhodococcus erythropolis (strain PR4 / NBRC 100887)</name>
    <dbReference type="NCBI Taxonomy" id="234621"/>
    <lineage>
        <taxon>Bacteria</taxon>
        <taxon>Bacillati</taxon>
        <taxon>Actinomycetota</taxon>
        <taxon>Actinomycetes</taxon>
        <taxon>Mycobacteriales</taxon>
        <taxon>Nocardiaceae</taxon>
        <taxon>Rhodococcus</taxon>
        <taxon>Rhodococcus erythropolis group</taxon>
    </lineage>
</organism>
<accession>C0ZZC1</accession>
<comment type="function">
    <text evidence="1">Involved in transcription antitermination. Required for transcription of ribosomal RNA (rRNA) genes. Binds specifically to the boxA antiterminator sequence of the ribosomal RNA (rrn) operons.</text>
</comment>
<comment type="similarity">
    <text evidence="1">Belongs to the NusB family.</text>
</comment>
<reference key="1">
    <citation type="submission" date="2005-03" db="EMBL/GenBank/DDBJ databases">
        <title>Comparison of the complete genome sequences of Rhodococcus erythropolis PR4 and Rhodococcus opacus B4.</title>
        <authorList>
            <person name="Takarada H."/>
            <person name="Sekine M."/>
            <person name="Hosoyama A."/>
            <person name="Yamada R."/>
            <person name="Fujisawa T."/>
            <person name="Omata S."/>
            <person name="Shimizu A."/>
            <person name="Tsukatani N."/>
            <person name="Tanikawa S."/>
            <person name="Fujita N."/>
            <person name="Harayama S."/>
        </authorList>
    </citation>
    <scope>NUCLEOTIDE SEQUENCE [LARGE SCALE GENOMIC DNA]</scope>
    <source>
        <strain>PR4 / NBRC 100887</strain>
    </source>
</reference>
<dbReference type="EMBL" id="AP008957">
    <property type="protein sequence ID" value="BAH33706.1"/>
    <property type="molecule type" value="Genomic_DNA"/>
</dbReference>
<dbReference type="RefSeq" id="WP_007728014.1">
    <property type="nucleotide sequence ID" value="NC_012490.1"/>
</dbReference>
<dbReference type="SMR" id="C0ZZC1"/>
<dbReference type="GeneID" id="93804134"/>
<dbReference type="KEGG" id="rer:RER_29980"/>
<dbReference type="eggNOG" id="COG0781">
    <property type="taxonomic scope" value="Bacteria"/>
</dbReference>
<dbReference type="HOGENOM" id="CLU_087843_2_3_11"/>
<dbReference type="Proteomes" id="UP000002204">
    <property type="component" value="Chromosome"/>
</dbReference>
<dbReference type="GO" id="GO:0005829">
    <property type="term" value="C:cytosol"/>
    <property type="evidence" value="ECO:0007669"/>
    <property type="project" value="TreeGrafter"/>
</dbReference>
<dbReference type="GO" id="GO:0003723">
    <property type="term" value="F:RNA binding"/>
    <property type="evidence" value="ECO:0007669"/>
    <property type="project" value="UniProtKB-UniRule"/>
</dbReference>
<dbReference type="GO" id="GO:0006353">
    <property type="term" value="P:DNA-templated transcription termination"/>
    <property type="evidence" value="ECO:0007669"/>
    <property type="project" value="UniProtKB-UniRule"/>
</dbReference>
<dbReference type="GO" id="GO:0031564">
    <property type="term" value="P:transcription antitermination"/>
    <property type="evidence" value="ECO:0007669"/>
    <property type="project" value="UniProtKB-KW"/>
</dbReference>
<dbReference type="CDD" id="cd00619">
    <property type="entry name" value="Terminator_NusB"/>
    <property type="match status" value="1"/>
</dbReference>
<dbReference type="Gene3D" id="1.10.940.10">
    <property type="entry name" value="NusB-like"/>
    <property type="match status" value="1"/>
</dbReference>
<dbReference type="HAMAP" id="MF_00073">
    <property type="entry name" value="NusB"/>
    <property type="match status" value="1"/>
</dbReference>
<dbReference type="InterPro" id="IPR035926">
    <property type="entry name" value="NusB-like_sf"/>
</dbReference>
<dbReference type="InterPro" id="IPR011605">
    <property type="entry name" value="NusB_fam"/>
</dbReference>
<dbReference type="InterPro" id="IPR006027">
    <property type="entry name" value="NusB_RsmB_TIM44"/>
</dbReference>
<dbReference type="NCBIfam" id="TIGR01951">
    <property type="entry name" value="nusB"/>
    <property type="match status" value="1"/>
</dbReference>
<dbReference type="PANTHER" id="PTHR11078:SF3">
    <property type="entry name" value="ANTITERMINATION NUSB DOMAIN-CONTAINING PROTEIN"/>
    <property type="match status" value="1"/>
</dbReference>
<dbReference type="PANTHER" id="PTHR11078">
    <property type="entry name" value="N UTILIZATION SUBSTANCE PROTEIN B-RELATED"/>
    <property type="match status" value="1"/>
</dbReference>
<dbReference type="Pfam" id="PF01029">
    <property type="entry name" value="NusB"/>
    <property type="match status" value="1"/>
</dbReference>
<dbReference type="SUPFAM" id="SSF48013">
    <property type="entry name" value="NusB-like"/>
    <property type="match status" value="1"/>
</dbReference>
<gene>
    <name evidence="1" type="primary">nusB</name>
    <name type="ordered locus">RER_29980</name>
</gene>
<keyword id="KW-0694">RNA-binding</keyword>
<keyword id="KW-0804">Transcription</keyword>
<keyword id="KW-0889">Transcription antitermination</keyword>
<keyword id="KW-0805">Transcription regulation</keyword>
<name>NUSB_RHOE4</name>